<proteinExistence type="inferred from homology"/>
<evidence type="ECO:0000250" key="1">
    <source>
        <dbReference type="UniProtKB" id="P02699"/>
    </source>
</evidence>
<evidence type="ECO:0000250" key="2">
    <source>
        <dbReference type="UniProtKB" id="P31356"/>
    </source>
</evidence>
<evidence type="ECO:0000250" key="3">
    <source>
        <dbReference type="UniProtKB" id="P35356"/>
    </source>
</evidence>
<evidence type="ECO:0000255" key="4"/>
<evidence type="ECO:0000255" key="5">
    <source>
        <dbReference type="PROSITE-ProRule" id="PRU00521"/>
    </source>
</evidence>
<evidence type="ECO:0000305" key="6"/>
<accession>O18481</accession>
<feature type="chain" id="PRO_0000197741" description="Rhodopsin">
    <location>
        <begin position="1" status="less than"/>
        <end position="301" status="greater than"/>
    </location>
</feature>
<feature type="topological domain" description="Extracellular" evidence="6">
    <location>
        <begin position="1" status="less than"/>
        <end position="18"/>
    </location>
</feature>
<feature type="transmembrane region" description="Helical; Name=1" evidence="1">
    <location>
        <begin position="19"/>
        <end position="43"/>
    </location>
</feature>
<feature type="topological domain" description="Cytoplasmic" evidence="6">
    <location>
        <begin position="44"/>
        <end position="55"/>
    </location>
</feature>
<feature type="transmembrane region" description="Helical; Name=2" evidence="1">
    <location>
        <begin position="56"/>
        <end position="78"/>
    </location>
</feature>
<feature type="topological domain" description="Extracellular" evidence="6">
    <location>
        <begin position="79"/>
        <end position="92"/>
    </location>
</feature>
<feature type="transmembrane region" description="Helical; Name=3" evidence="1">
    <location>
        <begin position="93"/>
        <end position="115"/>
    </location>
</feature>
<feature type="topological domain" description="Cytoplasmic" evidence="6">
    <location>
        <begin position="116"/>
        <end position="134"/>
    </location>
</feature>
<feature type="transmembrane region" description="Helical; Name=4" evidence="1">
    <location>
        <begin position="135"/>
        <end position="155"/>
    </location>
</feature>
<feature type="topological domain" description="Extracellular" evidence="6">
    <location>
        <begin position="156"/>
        <end position="182"/>
    </location>
</feature>
<feature type="transmembrane region" description="Helical; Name=5" evidence="1">
    <location>
        <begin position="183"/>
        <end position="204"/>
    </location>
</feature>
<feature type="topological domain" description="Cytoplasmic" evidence="6">
    <location>
        <begin position="205"/>
        <end position="245"/>
    </location>
</feature>
<feature type="transmembrane region" description="Helical; Name=6" evidence="1">
    <location>
        <begin position="246"/>
        <end position="267"/>
    </location>
</feature>
<feature type="topological domain" description="Extracellular" evidence="6">
    <location>
        <begin position="268"/>
        <end position="278"/>
    </location>
</feature>
<feature type="transmembrane region" description="Helical; Name=7" evidence="1">
    <location>
        <begin position="279"/>
        <end position="300"/>
    </location>
</feature>
<feature type="short sequence motif" description="'Ionic lock' involved in activated form stabilization" evidence="1">
    <location>
        <begin position="116"/>
        <end position="118"/>
    </location>
</feature>
<feature type="modified residue" description="N6-(retinylidene)lysine" evidence="1">
    <location>
        <position position="288"/>
    </location>
</feature>
<feature type="glycosylation site" description="N-linked (GlcNAc...) asparagine" evidence="4">
    <location>
        <position position="165"/>
    </location>
</feature>
<feature type="disulfide bond" evidence="5">
    <location>
        <begin position="92"/>
        <end position="169"/>
    </location>
</feature>
<feature type="non-terminal residue">
    <location>
        <position position="1"/>
    </location>
</feature>
<feature type="non-terminal residue">
    <location>
        <position position="301"/>
    </location>
</feature>
<dbReference type="EMBL" id="AF005387">
    <property type="protein sequence ID" value="AAB63378.1"/>
    <property type="molecule type" value="Genomic_DNA"/>
</dbReference>
<dbReference type="SMR" id="O18481"/>
<dbReference type="GlyCosmos" id="O18481">
    <property type="glycosylation" value="1 site, No reported glycans"/>
</dbReference>
<dbReference type="GO" id="GO:0042995">
    <property type="term" value="C:cell projection"/>
    <property type="evidence" value="ECO:0007669"/>
    <property type="project" value="UniProtKB-KW"/>
</dbReference>
<dbReference type="GO" id="GO:0005886">
    <property type="term" value="C:plasma membrane"/>
    <property type="evidence" value="ECO:0000250"/>
    <property type="project" value="UniProtKB"/>
</dbReference>
<dbReference type="GO" id="GO:0004930">
    <property type="term" value="F:G protein-coupled receptor activity"/>
    <property type="evidence" value="ECO:0007669"/>
    <property type="project" value="UniProtKB-KW"/>
</dbReference>
<dbReference type="GO" id="GO:0009881">
    <property type="term" value="F:photoreceptor activity"/>
    <property type="evidence" value="ECO:0007669"/>
    <property type="project" value="UniProtKB-KW"/>
</dbReference>
<dbReference type="GO" id="GO:0007602">
    <property type="term" value="P:phototransduction"/>
    <property type="evidence" value="ECO:0007669"/>
    <property type="project" value="UniProtKB-KW"/>
</dbReference>
<dbReference type="GO" id="GO:0007601">
    <property type="term" value="P:visual perception"/>
    <property type="evidence" value="ECO:0007669"/>
    <property type="project" value="UniProtKB-KW"/>
</dbReference>
<dbReference type="CDD" id="cd15079">
    <property type="entry name" value="7tmA_photoreceptors_insect"/>
    <property type="match status" value="1"/>
</dbReference>
<dbReference type="FunFam" id="1.20.1070.10:FF:000044">
    <property type="entry name" value="Opsin, ultraviolet-sensitive"/>
    <property type="match status" value="1"/>
</dbReference>
<dbReference type="Gene3D" id="1.20.1070.10">
    <property type="entry name" value="Rhodopsin 7-helix transmembrane proteins"/>
    <property type="match status" value="1"/>
</dbReference>
<dbReference type="InterPro" id="IPR050125">
    <property type="entry name" value="GPCR_opsins"/>
</dbReference>
<dbReference type="InterPro" id="IPR000276">
    <property type="entry name" value="GPCR_Rhodpsn"/>
</dbReference>
<dbReference type="InterPro" id="IPR017452">
    <property type="entry name" value="GPCR_Rhodpsn_7TM"/>
</dbReference>
<dbReference type="InterPro" id="IPR001760">
    <property type="entry name" value="Opsin"/>
</dbReference>
<dbReference type="InterPro" id="IPR001391">
    <property type="entry name" value="Opsin_lateye"/>
</dbReference>
<dbReference type="InterPro" id="IPR027430">
    <property type="entry name" value="Retinal_BS"/>
</dbReference>
<dbReference type="PANTHER" id="PTHR24240">
    <property type="entry name" value="OPSIN"/>
    <property type="match status" value="1"/>
</dbReference>
<dbReference type="Pfam" id="PF00001">
    <property type="entry name" value="7tm_1"/>
    <property type="match status" value="1"/>
</dbReference>
<dbReference type="PRINTS" id="PR00237">
    <property type="entry name" value="GPCRRHODOPSN"/>
</dbReference>
<dbReference type="PRINTS" id="PR00238">
    <property type="entry name" value="OPSIN"/>
</dbReference>
<dbReference type="PRINTS" id="PR00578">
    <property type="entry name" value="OPSINLTRLEYE"/>
</dbReference>
<dbReference type="SUPFAM" id="SSF81321">
    <property type="entry name" value="Family A G protein-coupled receptor-like"/>
    <property type="match status" value="1"/>
</dbReference>
<dbReference type="PROSITE" id="PS00237">
    <property type="entry name" value="G_PROTEIN_RECEP_F1_1"/>
    <property type="match status" value="1"/>
</dbReference>
<dbReference type="PROSITE" id="PS50262">
    <property type="entry name" value="G_PROTEIN_RECEP_F1_2"/>
    <property type="match status" value="1"/>
</dbReference>
<dbReference type="PROSITE" id="PS00238">
    <property type="entry name" value="OPSIN"/>
    <property type="match status" value="1"/>
</dbReference>
<comment type="function">
    <text evidence="3">Photoreceptor required for image-forming vision at low light intensity. Can use both retinal and 3-dehydroretinal as visual pigment. Light-induced isomerization of 11-cis to all-trans retinal triggers a conformational change that activates signaling via G-proteins. Signaling via GNAQ probably mediates the activation of phospholipase C.</text>
</comment>
<comment type="subunit">
    <text evidence="3">Homodimer. Interacts with GNAQ.</text>
</comment>
<comment type="subcellular location">
    <subcellularLocation>
        <location evidence="3">Cell projection</location>
        <location evidence="3">Rhabdomere membrane</location>
        <topology evidence="2">Multi-pass membrane protein</topology>
    </subcellularLocation>
</comment>
<comment type="PTM">
    <text evidence="1">Contains one covalently linked retinal chromophore.</text>
</comment>
<comment type="similarity">
    <text evidence="5">Belongs to the G-protein coupled receptor 1 family. Opsin subfamily.</text>
</comment>
<sequence length="301" mass="34565">LHMIHLHWYQYPPMNPIMYPLLLVFMLITGILCLAGNFVTIWVFMNTKSLRTPANLLVVNLAMSDFLMMFTMFPPMMITCYYHTWTLGATFCQVYAFLGNLCGCASIWTMVFITFDRYNVIVKGVAGEPLSTKKATLWILTIWILSTTWCVAPFFGWNRYVPEGNLTGCGTDYLSQDILSRSYLYIYSTWVYFLPLAITIYCYVVIIKAVAAHEKGMRDQAKKMGIKSLRNEEAQKTSAECRLAKIAMTTVALWFIAWTPYLLINWVGMFARSYLSPVYTIWGYVFAKANAVYNPIVYAIS</sequence>
<name>OPSD_ORCAU</name>
<keyword id="KW-1003">Cell membrane</keyword>
<keyword id="KW-0966">Cell projection</keyword>
<keyword id="KW-0157">Chromophore</keyword>
<keyword id="KW-1015">Disulfide bond</keyword>
<keyword id="KW-0297">G-protein coupled receptor</keyword>
<keyword id="KW-0325">Glycoprotein</keyword>
<keyword id="KW-0472">Membrane</keyword>
<keyword id="KW-0597">Phosphoprotein</keyword>
<keyword id="KW-0600">Photoreceptor protein</keyword>
<keyword id="KW-0675">Receptor</keyword>
<keyword id="KW-0681">Retinal protein</keyword>
<keyword id="KW-0716">Sensory transduction</keyword>
<keyword id="KW-0807">Transducer</keyword>
<keyword id="KW-0812">Transmembrane</keyword>
<keyword id="KW-1133">Transmembrane helix</keyword>
<keyword id="KW-0844">Vision</keyword>
<protein>
    <recommendedName>
        <fullName>Rhodopsin</fullName>
    </recommendedName>
</protein>
<gene>
    <name type="primary">RHO</name>
</gene>
<reference key="1">
    <citation type="journal article" date="1997" name="Nature">
        <title>Rhodopsin evolution in the dark.</title>
        <authorList>
            <person name="Crandall K.A."/>
            <person name="Hillis D.M."/>
        </authorList>
    </citation>
    <scope>NUCLEOTIDE SEQUENCE [GENOMIC DNA]</scope>
</reference>
<organism>
    <name type="scientific">Orconectes australis</name>
    <name type="common">Southern cave crayfish</name>
    <dbReference type="NCBI Taxonomy" id="61490"/>
    <lineage>
        <taxon>Eukaryota</taxon>
        <taxon>Metazoa</taxon>
        <taxon>Ecdysozoa</taxon>
        <taxon>Arthropoda</taxon>
        <taxon>Crustacea</taxon>
        <taxon>Multicrustacea</taxon>
        <taxon>Malacostraca</taxon>
        <taxon>Eumalacostraca</taxon>
        <taxon>Eucarida</taxon>
        <taxon>Decapoda</taxon>
        <taxon>Pleocyemata</taxon>
        <taxon>Astacidea</taxon>
        <taxon>Astacoidea</taxon>
        <taxon>Cambaridae</taxon>
        <taxon>Orconectes</taxon>
    </lineage>
</organism>